<name>PCNA_PYRFU</name>
<keyword id="KW-0002">3D-structure</keyword>
<keyword id="KW-0235">DNA replication</keyword>
<keyword id="KW-0238">DNA-binding</keyword>
<keyword id="KW-1185">Reference proteome</keyword>
<evidence type="ECO:0000255" key="1">
    <source>
        <dbReference type="HAMAP-Rule" id="MF_00317"/>
    </source>
</evidence>
<evidence type="ECO:0000269" key="2">
    <source>
    </source>
</evidence>
<evidence type="ECO:0000269" key="3">
    <source>
    </source>
</evidence>
<evidence type="ECO:0000269" key="4">
    <source>
    </source>
</evidence>
<evidence type="ECO:0000269" key="5">
    <source>
    </source>
</evidence>
<evidence type="ECO:0000269" key="6">
    <source>
    </source>
</evidence>
<evidence type="ECO:0000269" key="7">
    <source>
    </source>
</evidence>
<evidence type="ECO:0007829" key="8">
    <source>
        <dbReference type="PDB" id="1IZ4"/>
    </source>
</evidence>
<evidence type="ECO:0007829" key="9">
    <source>
        <dbReference type="PDB" id="1IZ5"/>
    </source>
</evidence>
<reference key="1">
    <citation type="journal article" date="1999" name="J. Bacteriol.">
        <title>Functional interactions of a homolog of proliferating cell nuclear antigen with DNA polymerases in Archaea.</title>
        <authorList>
            <person name="Cann I.K.O."/>
            <person name="Ishino S."/>
            <person name="Hayashi I."/>
            <person name="Komori K."/>
            <person name="Toh H."/>
            <person name="Morikawa K."/>
            <person name="Ishino Y."/>
        </authorList>
    </citation>
    <scope>NUCLEOTIDE SEQUENCE [GENOMIC DNA]</scope>
    <scope>CHARACTERIZATION</scope>
    <source>
        <strain>ATCC 43587 / DSM 3638 / JCM 8422 / Vc1</strain>
    </source>
</reference>
<reference key="2">
    <citation type="journal article" date="1999" name="Genetics">
        <title>Divergence of the hyperthermophilic archaea Pyrococcus furiosus and P. horikoshii inferred from complete genomic sequences.</title>
        <authorList>
            <person name="Maeder D.L."/>
            <person name="Weiss R.B."/>
            <person name="Dunn D.M."/>
            <person name="Cherry J.L."/>
            <person name="Gonzalez J.M."/>
            <person name="DiRuggiero J."/>
            <person name="Robb F.T."/>
        </authorList>
    </citation>
    <scope>NUCLEOTIDE SEQUENCE [LARGE SCALE GENOMIC DNA]</scope>
    <source>
        <strain>ATCC 43587 / DSM 3638 / JCM 8422 / Vc1</strain>
    </source>
</reference>
<reference key="3">
    <citation type="journal article" date="1999" name="Proc. Natl. Acad. Sci. U.S.A.">
        <title>A Holliday junction resolvase from Pyrococcus furiosus: functional similarity to Escherichia coli RuvC provides evidence for conserved mechanism of homologous recombination in Bacteria, Eukarya, and Archaea.</title>
        <authorList>
            <person name="Komori K."/>
            <person name="Sakae S."/>
            <person name="Shinagawa H."/>
            <person name="Morikawa K."/>
            <person name="Ishino Y."/>
        </authorList>
    </citation>
    <scope>INTERACTION WITH HJC</scope>
    <scope>SUBUNIT</scope>
    <source>
        <strain>ATCC 43587 / DSM 3638 / JCM 8422 / Vc1</strain>
    </source>
</reference>
<reference key="4">
    <citation type="journal article" date="2001" name="J. Bacteriol.">
        <title>Biochemical analysis of replication factor C from the hyperthermophilic archaeon Pyrococcus furiosus.</title>
        <authorList>
            <person name="Cann I.K.O."/>
            <person name="Ishino S."/>
            <person name="Yuasa M."/>
            <person name="Daiyasu H."/>
            <person name="Toh H."/>
            <person name="Ishino Y."/>
        </authorList>
    </citation>
    <scope>FUNCTION</scope>
    <source>
        <strain>ATCC 43587 / DSM 3638 / JCM 8422 / Vc1</strain>
    </source>
</reference>
<reference key="5">
    <citation type="journal article" date="2006" name="Genes Cells">
        <title>The archaeal Hjm helicase has recQ-like functions, and may be involved in repair of stalled replication fork.</title>
        <authorList>
            <person name="Fujikane R."/>
            <person name="Shinagawa H."/>
            <person name="Ishino Y."/>
        </authorList>
    </citation>
    <scope>FUNCTION</scope>
    <scope>INTERACTION WITH HEL308</scope>
    <scope>SUBUNIT</scope>
</reference>
<reference key="6">
    <citation type="journal article" date="2001" name="Protein Sci.">
        <title>Crystal structure of an archaeal DNA sliding clamp: proliferating cell nuclear antigen from Pyrococcus furiosus.</title>
        <authorList>
            <person name="Matsumiya S."/>
            <person name="Ishino Y."/>
            <person name="Morikawa K."/>
        </authorList>
    </citation>
    <scope>X-RAY CRYSTALLOGRAPHY (2.1 ANGSTROMS)</scope>
    <scope>SUBUNIT</scope>
    <scope>MUTAGENESIS OF MET-73</scope>
</reference>
<reference key="7">
    <citation type="journal article" date="2002" name="Genes Cells">
        <title>Physical interaction between proliferating cell nuclear antigen and replication factor C from Pyrococcus furiosus.</title>
        <authorList>
            <person name="Matsumiya S."/>
            <person name="Ishino S."/>
            <person name="Ishino Y."/>
            <person name="Morikawa K."/>
        </authorList>
    </citation>
    <scope>X-RAY CRYSTALLOGRAPHY (2.3 ANGSTROMS)</scope>
    <scope>FUNCTION</scope>
    <scope>SUBUNIT</scope>
</reference>
<reference key="8">
    <citation type="journal article" date="2003" name="Protein Sci.">
        <title>Intermolecular ion pairs maintain the toroidal structure of Pyrococcus furiosus PCNA.</title>
        <authorList>
            <person name="Matsumiya S."/>
            <person name="Ishino S."/>
            <person name="Ishino Y."/>
            <person name="Morikawa K."/>
        </authorList>
    </citation>
    <scope>X-RAY CRYSTALLOGRAPHY (1.8 ANGSTROMS)</scope>
    <scope>SUBUNIT</scope>
    <scope>MUTAGENESIS OF ASP-143 AND 143-ASP--ASP-147</scope>
</reference>
<reference key="9">
    <citation type="submission" date="2009-11" db="PDB data bank">
        <title>Structural determinant for switching between the polymerase and exonuclease modes in the PCNA-replicative DNA polymerase complex.</title>
        <authorList>
            <person name="Nishida H."/>
            <person name="Mayanagi K."/>
            <person name="Kiyonari S."/>
            <person name="Sato Y."/>
            <person name="Ishino Y."/>
            <person name="Morikawa K."/>
        </authorList>
    </citation>
    <scope>X-RAY CRYSTALLOGRAPHY (2.67 ANGSTROMS)</scope>
</reference>
<protein>
    <recommendedName>
        <fullName evidence="1">DNA polymerase sliding clamp</fullName>
    </recommendedName>
    <alternativeName>
        <fullName evidence="1">Proliferating cell nuclear antigen homolog</fullName>
        <shortName evidence="1">PCNA</shortName>
    </alternativeName>
</protein>
<feature type="chain" id="PRO_0000149206" description="DNA polymerase sliding clamp">
    <location>
        <begin position="1"/>
        <end position="249"/>
    </location>
</feature>
<feature type="mutagenesis site" description="No observable effect." evidence="3">
    <original>M</original>
    <variation>L</variation>
    <location>
        <position position="73"/>
    </location>
</feature>
<feature type="mutagenesis site" description="No homotrimer formation. Stimulates ATPase activity of RFC, no stimulation of DNA synthesis by Pol I in presence and absence of RFC. Crystallizes as tail-to-tail homodimers." evidence="6">
    <original>DAVKD</original>
    <variation>AAVKA</variation>
    <location>
        <begin position="143"/>
        <end position="147"/>
    </location>
</feature>
<feature type="mutagenesis site" description="Small amount of homotrimer in solution. Stimulates ATPase activity of RFC and DNA synthesis by Pol I in presence and absence of RFC. Crystallizes as tail-to-tail homodimers." evidence="6">
    <original>D</original>
    <variation>A</variation>
    <location>
        <position position="143"/>
    </location>
</feature>
<feature type="strand" evidence="9">
    <location>
        <begin position="3"/>
        <end position="8"/>
    </location>
</feature>
<feature type="helix" evidence="9">
    <location>
        <begin position="10"/>
        <end position="20"/>
    </location>
</feature>
<feature type="strand" evidence="9">
    <location>
        <begin position="25"/>
        <end position="31"/>
    </location>
</feature>
<feature type="strand" evidence="9">
    <location>
        <begin position="33"/>
        <end position="41"/>
    </location>
</feature>
<feature type="strand" evidence="9">
    <location>
        <begin position="45"/>
        <end position="54"/>
    </location>
</feature>
<feature type="helix" evidence="9">
    <location>
        <begin position="55"/>
        <end position="57"/>
    </location>
</feature>
<feature type="strand" evidence="9">
    <location>
        <begin position="58"/>
        <end position="65"/>
    </location>
</feature>
<feature type="strand" evidence="9">
    <location>
        <begin position="67"/>
        <end position="72"/>
    </location>
</feature>
<feature type="helix" evidence="9">
    <location>
        <begin position="73"/>
        <end position="80"/>
    </location>
</feature>
<feature type="strand" evidence="9">
    <location>
        <begin position="88"/>
        <end position="93"/>
    </location>
</feature>
<feature type="strand" evidence="9">
    <location>
        <begin position="95"/>
        <end position="114"/>
    </location>
</feature>
<feature type="strand" evidence="9">
    <location>
        <begin position="132"/>
        <end position="137"/>
    </location>
</feature>
<feature type="helix" evidence="9">
    <location>
        <begin position="138"/>
        <end position="148"/>
    </location>
</feature>
<feature type="turn" evidence="9">
    <location>
        <begin position="149"/>
        <end position="151"/>
    </location>
</feature>
<feature type="strand" evidence="9">
    <location>
        <begin position="153"/>
        <end position="160"/>
    </location>
</feature>
<feature type="strand" evidence="9">
    <location>
        <begin position="163"/>
        <end position="169"/>
    </location>
</feature>
<feature type="strand" evidence="8">
    <location>
        <begin position="170"/>
        <end position="172"/>
    </location>
</feature>
<feature type="strand" evidence="9">
    <location>
        <begin position="174"/>
        <end position="180"/>
    </location>
</feature>
<feature type="turn" evidence="9">
    <location>
        <begin position="181"/>
        <end position="184"/>
    </location>
</feature>
<feature type="strand" evidence="9">
    <location>
        <begin position="185"/>
        <end position="193"/>
    </location>
</feature>
<feature type="strand" evidence="9">
    <location>
        <begin position="195"/>
        <end position="200"/>
    </location>
</feature>
<feature type="helix" evidence="9">
    <location>
        <begin position="201"/>
        <end position="208"/>
    </location>
</feature>
<feature type="strand" evidence="9">
    <location>
        <begin position="216"/>
        <end position="221"/>
    </location>
</feature>
<feature type="strand" evidence="9">
    <location>
        <begin position="227"/>
        <end position="233"/>
    </location>
</feature>
<feature type="turn" evidence="9">
    <location>
        <begin position="234"/>
        <end position="236"/>
    </location>
</feature>
<feature type="strand" evidence="9">
    <location>
        <begin position="237"/>
        <end position="243"/>
    </location>
</feature>
<comment type="function">
    <text evidence="4 5 7">Sliding clamp subunit that acts as a moving platform for DNA processing. Responsible for tethering the catalytic subunit of DNA polymerase to DNA during high-speed replication. Unlike its eukaryotic paralog, loads on circular DNA without the replication factor C (RFC) clamp loader, although RFC greatly increases loading efficiency. Stimulates the ATPase activity of replication factor C (RFC) in the presence of ssDNA. Stimulates the helicase activity of Hel308 and may alter its substrate specificity.</text>
</comment>
<comment type="subunit">
    <text evidence="2 3 5 6 7">Homotrimer which circularizes head-to-tail (head is a N-terminus, tail is at C-terminus) to form a toroid. RFC opens the toroid so it can load on DNA. Interacts with both Pol I (pol) and Pol II (polB-polC), with Hel308 (hjm) and with Hjc. Interaction with the C-terminal PIP-box of RfcL may stabilize the toroidal structure.</text>
</comment>
<comment type="interaction">
    <interactant intactId="EBI-15762053">
        <id>O73947</id>
    </interactant>
    <interactant intactId="EBI-15906191">
        <id>P81412</id>
        <label>polB</label>
    </interactant>
    <organismsDiffer>false</organismsDiffer>
    <experiments>2</experiments>
</comment>
<comment type="similarity">
    <text evidence="1">Belongs to the PCNA family.</text>
</comment>
<gene>
    <name evidence="1" type="primary">pcn</name>
    <name type="ordered locus">PF0983</name>
</gene>
<organism>
    <name type="scientific">Pyrococcus furiosus (strain ATCC 43587 / DSM 3638 / JCM 8422 / Vc1)</name>
    <dbReference type="NCBI Taxonomy" id="186497"/>
    <lineage>
        <taxon>Archaea</taxon>
        <taxon>Methanobacteriati</taxon>
        <taxon>Methanobacteriota</taxon>
        <taxon>Thermococci</taxon>
        <taxon>Thermococcales</taxon>
        <taxon>Thermococcaceae</taxon>
        <taxon>Pyrococcus</taxon>
    </lineage>
</organism>
<accession>O73947</accession>
<dbReference type="EMBL" id="AB017486">
    <property type="protein sequence ID" value="BAA33020.2"/>
    <property type="molecule type" value="Genomic_DNA"/>
</dbReference>
<dbReference type="EMBL" id="AE009950">
    <property type="protein sequence ID" value="AAL81107.1"/>
    <property type="molecule type" value="Genomic_DNA"/>
</dbReference>
<dbReference type="RefSeq" id="WP_011012120.1">
    <property type="nucleotide sequence ID" value="NZ_CP023154.1"/>
</dbReference>
<dbReference type="PDB" id="1GE8">
    <property type="method" value="X-ray"/>
    <property type="resolution" value="2.10 A"/>
    <property type="chains" value="A=1-249"/>
</dbReference>
<dbReference type="PDB" id="1ISQ">
    <property type="method" value="X-ray"/>
    <property type="resolution" value="2.30 A"/>
    <property type="chains" value="A=1-249"/>
</dbReference>
<dbReference type="PDB" id="1IZ4">
    <property type="method" value="X-ray"/>
    <property type="resolution" value="2.00 A"/>
    <property type="chains" value="A=1-249"/>
</dbReference>
<dbReference type="PDB" id="1IZ5">
    <property type="method" value="X-ray"/>
    <property type="resolution" value="1.80 A"/>
    <property type="chains" value="A/B=1-249"/>
</dbReference>
<dbReference type="PDB" id="3A2F">
    <property type="method" value="X-ray"/>
    <property type="resolution" value="2.67 A"/>
    <property type="chains" value="B=2-249"/>
</dbReference>
<dbReference type="PDB" id="5AUJ">
    <property type="method" value="X-ray"/>
    <property type="resolution" value="2.50 A"/>
    <property type="chains" value="A=1-249"/>
</dbReference>
<dbReference type="PDBsum" id="1GE8"/>
<dbReference type="PDBsum" id="1ISQ"/>
<dbReference type="PDBsum" id="1IZ4"/>
<dbReference type="PDBsum" id="1IZ5"/>
<dbReference type="PDBsum" id="3A2F"/>
<dbReference type="PDBsum" id="5AUJ"/>
<dbReference type="SMR" id="O73947"/>
<dbReference type="DIP" id="DIP-48777N"/>
<dbReference type="IntAct" id="O73947">
    <property type="interactions" value="2"/>
</dbReference>
<dbReference type="STRING" id="186497.PF0983"/>
<dbReference type="PaxDb" id="186497-PF0983"/>
<dbReference type="KEGG" id="pfu:PF0983"/>
<dbReference type="PATRIC" id="fig|186497.12.peg.1042"/>
<dbReference type="eggNOG" id="arCOG00488">
    <property type="taxonomic scope" value="Archaea"/>
</dbReference>
<dbReference type="HOGENOM" id="CLU_043978_1_0_2"/>
<dbReference type="OrthoDB" id="14749at2157"/>
<dbReference type="PhylomeDB" id="O73947"/>
<dbReference type="EvolutionaryTrace" id="O73947"/>
<dbReference type="Proteomes" id="UP000001013">
    <property type="component" value="Chromosome"/>
</dbReference>
<dbReference type="GO" id="GO:0003677">
    <property type="term" value="F:DNA binding"/>
    <property type="evidence" value="ECO:0007669"/>
    <property type="project" value="UniProtKB-UniRule"/>
</dbReference>
<dbReference type="GO" id="GO:0030337">
    <property type="term" value="F:DNA polymerase processivity factor activity"/>
    <property type="evidence" value="ECO:0007669"/>
    <property type="project" value="UniProtKB-UniRule"/>
</dbReference>
<dbReference type="GO" id="GO:0006272">
    <property type="term" value="P:leading strand elongation"/>
    <property type="evidence" value="ECO:0007669"/>
    <property type="project" value="TreeGrafter"/>
</dbReference>
<dbReference type="GO" id="GO:0006275">
    <property type="term" value="P:regulation of DNA replication"/>
    <property type="evidence" value="ECO:0007669"/>
    <property type="project" value="UniProtKB-UniRule"/>
</dbReference>
<dbReference type="CDD" id="cd00577">
    <property type="entry name" value="PCNA"/>
    <property type="match status" value="1"/>
</dbReference>
<dbReference type="FunFam" id="3.70.10.10:FF:000038">
    <property type="entry name" value="DNA polymerase sliding clamp 1"/>
    <property type="match status" value="1"/>
</dbReference>
<dbReference type="Gene3D" id="3.70.10.10">
    <property type="match status" value="1"/>
</dbReference>
<dbReference type="HAMAP" id="MF_00317">
    <property type="entry name" value="DNApol_clamp_arch"/>
    <property type="match status" value="1"/>
</dbReference>
<dbReference type="IDEAL" id="IID90015"/>
<dbReference type="InterPro" id="IPR046938">
    <property type="entry name" value="DNA_clamp_sf"/>
</dbReference>
<dbReference type="InterPro" id="IPR000730">
    <property type="entry name" value="Pr_cel_nuc_antig"/>
</dbReference>
<dbReference type="InterPro" id="IPR022649">
    <property type="entry name" value="Pr_cel_nuc_antig_C"/>
</dbReference>
<dbReference type="InterPro" id="IPR022659">
    <property type="entry name" value="Pr_cel_nuc_antig_CS"/>
</dbReference>
<dbReference type="InterPro" id="IPR022648">
    <property type="entry name" value="Pr_cel_nuc_antig_N"/>
</dbReference>
<dbReference type="NCBIfam" id="TIGR00590">
    <property type="entry name" value="pcna"/>
    <property type="match status" value="1"/>
</dbReference>
<dbReference type="NCBIfam" id="NF002219">
    <property type="entry name" value="PRK01115.1-2"/>
    <property type="match status" value="1"/>
</dbReference>
<dbReference type="NCBIfam" id="NF002221">
    <property type="entry name" value="PRK01115.1-4"/>
    <property type="match status" value="1"/>
</dbReference>
<dbReference type="PANTHER" id="PTHR11352">
    <property type="entry name" value="PROLIFERATING CELL NUCLEAR ANTIGEN"/>
    <property type="match status" value="1"/>
</dbReference>
<dbReference type="PANTHER" id="PTHR11352:SF0">
    <property type="entry name" value="PROLIFERATING CELL NUCLEAR ANTIGEN"/>
    <property type="match status" value="1"/>
</dbReference>
<dbReference type="Pfam" id="PF02747">
    <property type="entry name" value="PCNA_C"/>
    <property type="match status" value="1"/>
</dbReference>
<dbReference type="Pfam" id="PF00705">
    <property type="entry name" value="PCNA_N"/>
    <property type="match status" value="1"/>
</dbReference>
<dbReference type="PRINTS" id="PR00339">
    <property type="entry name" value="PCNACYCLIN"/>
</dbReference>
<dbReference type="SUPFAM" id="SSF55979">
    <property type="entry name" value="DNA clamp"/>
    <property type="match status" value="2"/>
</dbReference>
<dbReference type="PROSITE" id="PS01251">
    <property type="entry name" value="PCNA_1"/>
    <property type="match status" value="1"/>
</dbReference>
<sequence>MPFEIVFEGAKEFAQLIDTASKLIDEAAFKVTEDGISMRAMDPSRVVLIDLNLPSSIFSKYEVVEPETIGVNMDHLKKILKRGKAKDTLILKKGEENFLEITIQGTATRTFRVPLIDVEEMEVDLPELPFTAKVVVLGEVLKDAVKDASLVSDSIKFIARENEFIMKAEGETQEVEIKLTLEDEGLLDIEVQEETKSAYGVSYLSDMVKGLGKADEVTIKFGNEMPMQMEYYIRDEGRLTFLLAPRVEE</sequence>
<proteinExistence type="evidence at protein level"/>